<feature type="chain" id="PRO_1000100670" description="Cytidylate kinase">
    <location>
        <begin position="1"/>
        <end position="209"/>
    </location>
</feature>
<feature type="binding site" evidence="1">
    <location>
        <begin position="7"/>
        <end position="15"/>
    </location>
    <ligand>
        <name>ATP</name>
        <dbReference type="ChEBI" id="CHEBI:30616"/>
    </ligand>
</feature>
<proteinExistence type="inferred from homology"/>
<accession>B6JCN5</accession>
<accession>F8C098</accession>
<gene>
    <name evidence="1" type="primary">cmk</name>
    <name type="ordered locus">OCAR_4470</name>
    <name type="ordered locus">OCA5_c00630</name>
</gene>
<organism>
    <name type="scientific">Afipia carboxidovorans (strain ATCC 49405 / DSM 1227 / KCTC 32145 / OM5)</name>
    <name type="common">Oligotropha carboxidovorans</name>
    <dbReference type="NCBI Taxonomy" id="504832"/>
    <lineage>
        <taxon>Bacteria</taxon>
        <taxon>Pseudomonadati</taxon>
        <taxon>Pseudomonadota</taxon>
        <taxon>Alphaproteobacteria</taxon>
        <taxon>Hyphomicrobiales</taxon>
        <taxon>Nitrobacteraceae</taxon>
        <taxon>Afipia</taxon>
    </lineage>
</organism>
<dbReference type="EC" id="2.7.4.25" evidence="1"/>
<dbReference type="EMBL" id="CP001196">
    <property type="protein sequence ID" value="ACI91615.1"/>
    <property type="molecule type" value="Genomic_DNA"/>
</dbReference>
<dbReference type="EMBL" id="CP002826">
    <property type="protein sequence ID" value="AEI04797.1"/>
    <property type="molecule type" value="Genomic_DNA"/>
</dbReference>
<dbReference type="RefSeq" id="WP_012561646.1">
    <property type="nucleotide sequence ID" value="NC_015684.1"/>
</dbReference>
<dbReference type="SMR" id="B6JCN5"/>
<dbReference type="STRING" id="504832.OCA5_c00630"/>
<dbReference type="KEGG" id="oca:OCAR_4470"/>
<dbReference type="KEGG" id="ocg:OCA5_c00630"/>
<dbReference type="PATRIC" id="fig|504832.7.peg.67"/>
<dbReference type="eggNOG" id="COG0283">
    <property type="taxonomic scope" value="Bacteria"/>
</dbReference>
<dbReference type="HOGENOM" id="CLU_079959_0_1_5"/>
<dbReference type="OrthoDB" id="9807434at2"/>
<dbReference type="Proteomes" id="UP000007730">
    <property type="component" value="Chromosome"/>
</dbReference>
<dbReference type="GO" id="GO:0005737">
    <property type="term" value="C:cytoplasm"/>
    <property type="evidence" value="ECO:0007669"/>
    <property type="project" value="UniProtKB-SubCell"/>
</dbReference>
<dbReference type="GO" id="GO:0005524">
    <property type="term" value="F:ATP binding"/>
    <property type="evidence" value="ECO:0007669"/>
    <property type="project" value="UniProtKB-UniRule"/>
</dbReference>
<dbReference type="GO" id="GO:0036430">
    <property type="term" value="F:CMP kinase activity"/>
    <property type="evidence" value="ECO:0007669"/>
    <property type="project" value="RHEA"/>
</dbReference>
<dbReference type="GO" id="GO:0036431">
    <property type="term" value="F:dCMP kinase activity"/>
    <property type="evidence" value="ECO:0007669"/>
    <property type="project" value="RHEA"/>
</dbReference>
<dbReference type="GO" id="GO:0006220">
    <property type="term" value="P:pyrimidine nucleotide metabolic process"/>
    <property type="evidence" value="ECO:0007669"/>
    <property type="project" value="UniProtKB-UniRule"/>
</dbReference>
<dbReference type="CDD" id="cd02020">
    <property type="entry name" value="CMPK"/>
    <property type="match status" value="1"/>
</dbReference>
<dbReference type="Gene3D" id="3.40.50.300">
    <property type="entry name" value="P-loop containing nucleotide triphosphate hydrolases"/>
    <property type="match status" value="1"/>
</dbReference>
<dbReference type="HAMAP" id="MF_00238">
    <property type="entry name" value="Cytidyl_kinase_type1"/>
    <property type="match status" value="1"/>
</dbReference>
<dbReference type="InterPro" id="IPR003136">
    <property type="entry name" value="Cytidylate_kin"/>
</dbReference>
<dbReference type="InterPro" id="IPR011994">
    <property type="entry name" value="Cytidylate_kinase_dom"/>
</dbReference>
<dbReference type="InterPro" id="IPR027417">
    <property type="entry name" value="P-loop_NTPase"/>
</dbReference>
<dbReference type="NCBIfam" id="TIGR00017">
    <property type="entry name" value="cmk"/>
    <property type="match status" value="1"/>
</dbReference>
<dbReference type="Pfam" id="PF02224">
    <property type="entry name" value="Cytidylate_kin"/>
    <property type="match status" value="1"/>
</dbReference>
<dbReference type="SUPFAM" id="SSF52540">
    <property type="entry name" value="P-loop containing nucleoside triphosphate hydrolases"/>
    <property type="match status" value="1"/>
</dbReference>
<reference key="1">
    <citation type="journal article" date="2008" name="J. Bacteriol.">
        <title>Genome sequence of the chemolithoautotrophic bacterium Oligotropha carboxidovorans OM5T.</title>
        <authorList>
            <person name="Paul D."/>
            <person name="Bridges S."/>
            <person name="Burgess S.C."/>
            <person name="Dandass Y."/>
            <person name="Lawrence M.L."/>
        </authorList>
    </citation>
    <scope>NUCLEOTIDE SEQUENCE [LARGE SCALE GENOMIC DNA]</scope>
    <source>
        <strain>ATCC 49405 / DSM 1227 / KCTC 32145 / OM5</strain>
    </source>
</reference>
<reference key="2">
    <citation type="journal article" date="2011" name="J. Bacteriol.">
        <title>Complete genome sequences of the chemolithoautotrophic Oligotropha carboxidovorans strains OM4 and OM5.</title>
        <authorList>
            <person name="Volland S."/>
            <person name="Rachinger M."/>
            <person name="Strittmatter A."/>
            <person name="Daniel R."/>
            <person name="Gottschalk G."/>
            <person name="Meyer O."/>
        </authorList>
    </citation>
    <scope>NUCLEOTIDE SEQUENCE [LARGE SCALE GENOMIC DNA]</scope>
    <source>
        <strain>ATCC 49405 / DSM 1227 / KCTC 32145 / OM5</strain>
    </source>
</reference>
<comment type="catalytic activity">
    <reaction evidence="1">
        <text>CMP + ATP = CDP + ADP</text>
        <dbReference type="Rhea" id="RHEA:11600"/>
        <dbReference type="ChEBI" id="CHEBI:30616"/>
        <dbReference type="ChEBI" id="CHEBI:58069"/>
        <dbReference type="ChEBI" id="CHEBI:60377"/>
        <dbReference type="ChEBI" id="CHEBI:456216"/>
        <dbReference type="EC" id="2.7.4.25"/>
    </reaction>
</comment>
<comment type="catalytic activity">
    <reaction evidence="1">
        <text>dCMP + ATP = dCDP + ADP</text>
        <dbReference type="Rhea" id="RHEA:25094"/>
        <dbReference type="ChEBI" id="CHEBI:30616"/>
        <dbReference type="ChEBI" id="CHEBI:57566"/>
        <dbReference type="ChEBI" id="CHEBI:58593"/>
        <dbReference type="ChEBI" id="CHEBI:456216"/>
        <dbReference type="EC" id="2.7.4.25"/>
    </reaction>
</comment>
<comment type="subcellular location">
    <subcellularLocation>
        <location evidence="1">Cytoplasm</location>
    </subcellularLocation>
</comment>
<comment type="similarity">
    <text evidence="1">Belongs to the cytidylate kinase family. Type 1 subfamily.</text>
</comment>
<name>KCY_AFIC5</name>
<evidence type="ECO:0000255" key="1">
    <source>
        <dbReference type="HAMAP-Rule" id="MF_00238"/>
    </source>
</evidence>
<keyword id="KW-0067">ATP-binding</keyword>
<keyword id="KW-0963">Cytoplasm</keyword>
<keyword id="KW-0418">Kinase</keyword>
<keyword id="KW-0547">Nucleotide-binding</keyword>
<keyword id="KW-1185">Reference proteome</keyword>
<keyword id="KW-0808">Transferase</keyword>
<protein>
    <recommendedName>
        <fullName evidence="1">Cytidylate kinase</fullName>
        <shortName evidence="1">CK</shortName>
        <ecNumber evidence="1">2.7.4.25</ecNumber>
    </recommendedName>
    <alternativeName>
        <fullName evidence="1">Cytidine monophosphate kinase</fullName>
        <shortName evidence="1">CMP kinase</shortName>
    </alternativeName>
</protein>
<sequence length="209" mass="22056">MIIAIDGPAASGKGTLGKRLAAHYGFRHLDTGVIYRAVAKAMLDLGADLQDEARAVAVARALDPEKFGDPVLKTQAIGDAASVVSAIPAVREALINFQRQFAADPPGAVLDGRDIGTVICPDADVKIFVVADPKVRAHRRTLEARGRGEAADEALVLADILKRDERDKNRAAAPLKCAADAHVLDNSNLDIEGGVRAAIAIIEQARATR</sequence>